<gene>
    <name evidence="1" type="primary">rimP</name>
    <name type="ordered locus">Ccel_0453</name>
</gene>
<organism>
    <name type="scientific">Ruminiclostridium cellulolyticum (strain ATCC 35319 / DSM 5812 / JCM 6584 / H10)</name>
    <name type="common">Clostridium cellulolyticum</name>
    <dbReference type="NCBI Taxonomy" id="394503"/>
    <lineage>
        <taxon>Bacteria</taxon>
        <taxon>Bacillati</taxon>
        <taxon>Bacillota</taxon>
        <taxon>Clostridia</taxon>
        <taxon>Eubacteriales</taxon>
        <taxon>Oscillospiraceae</taxon>
        <taxon>Ruminiclostridium</taxon>
    </lineage>
</organism>
<reference key="1">
    <citation type="submission" date="2009-01" db="EMBL/GenBank/DDBJ databases">
        <title>Complete sequence of Clostridium cellulolyticum H10.</title>
        <authorList>
            <consortium name="US DOE Joint Genome Institute"/>
            <person name="Lucas S."/>
            <person name="Copeland A."/>
            <person name="Lapidus A."/>
            <person name="Glavina del Rio T."/>
            <person name="Dalin E."/>
            <person name="Tice H."/>
            <person name="Bruce D."/>
            <person name="Goodwin L."/>
            <person name="Pitluck S."/>
            <person name="Chertkov O."/>
            <person name="Saunders E."/>
            <person name="Brettin T."/>
            <person name="Detter J.C."/>
            <person name="Han C."/>
            <person name="Larimer F."/>
            <person name="Land M."/>
            <person name="Hauser L."/>
            <person name="Kyrpides N."/>
            <person name="Ivanova N."/>
            <person name="Zhou J."/>
            <person name="Richardson P."/>
        </authorList>
    </citation>
    <scope>NUCLEOTIDE SEQUENCE [LARGE SCALE GENOMIC DNA]</scope>
    <source>
        <strain>ATCC 35319 / DSM 5812 / JCM 6584 / H10</strain>
    </source>
</reference>
<proteinExistence type="inferred from homology"/>
<sequence length="152" mass="17322">MKKNIQQTVTELVSPVVESLNYELVDIEYVKEGANWYLRVYIDKPGGISIDDCQAVSEQVSDLLDKDDPIDQSYFLEVSSPGLDRPLKTEKDFAKYKGELVEVKVFQPIDGKKIFEGELVGLKDNIIVINQDGHNVQFERDEVAIVKRVIKF</sequence>
<accession>B8I6E3</accession>
<dbReference type="EMBL" id="CP001348">
    <property type="protein sequence ID" value="ACL74835.1"/>
    <property type="molecule type" value="Genomic_DNA"/>
</dbReference>
<dbReference type="RefSeq" id="WP_012634897.1">
    <property type="nucleotide sequence ID" value="NC_011898.1"/>
</dbReference>
<dbReference type="SMR" id="B8I6E3"/>
<dbReference type="STRING" id="394503.Ccel_0453"/>
<dbReference type="KEGG" id="cce:Ccel_0453"/>
<dbReference type="eggNOG" id="COG0779">
    <property type="taxonomic scope" value="Bacteria"/>
</dbReference>
<dbReference type="HOGENOM" id="CLU_070525_2_0_9"/>
<dbReference type="OrthoDB" id="9805006at2"/>
<dbReference type="Proteomes" id="UP000001349">
    <property type="component" value="Chromosome"/>
</dbReference>
<dbReference type="GO" id="GO:0005829">
    <property type="term" value="C:cytosol"/>
    <property type="evidence" value="ECO:0007669"/>
    <property type="project" value="TreeGrafter"/>
</dbReference>
<dbReference type="GO" id="GO:0000028">
    <property type="term" value="P:ribosomal small subunit assembly"/>
    <property type="evidence" value="ECO:0007669"/>
    <property type="project" value="TreeGrafter"/>
</dbReference>
<dbReference type="GO" id="GO:0006412">
    <property type="term" value="P:translation"/>
    <property type="evidence" value="ECO:0007669"/>
    <property type="project" value="TreeGrafter"/>
</dbReference>
<dbReference type="CDD" id="cd01734">
    <property type="entry name" value="YlxS_C"/>
    <property type="match status" value="1"/>
</dbReference>
<dbReference type="FunFam" id="3.30.300.70:FF:000001">
    <property type="entry name" value="Ribosome maturation factor RimP"/>
    <property type="match status" value="1"/>
</dbReference>
<dbReference type="Gene3D" id="2.30.30.180">
    <property type="entry name" value="Ribosome maturation factor RimP, C-terminal domain"/>
    <property type="match status" value="1"/>
</dbReference>
<dbReference type="Gene3D" id="3.30.300.70">
    <property type="entry name" value="RimP-like superfamily, N-terminal"/>
    <property type="match status" value="1"/>
</dbReference>
<dbReference type="HAMAP" id="MF_01077">
    <property type="entry name" value="RimP"/>
    <property type="match status" value="1"/>
</dbReference>
<dbReference type="InterPro" id="IPR003728">
    <property type="entry name" value="Ribosome_maturation_RimP"/>
</dbReference>
<dbReference type="InterPro" id="IPR028998">
    <property type="entry name" value="RimP_C"/>
</dbReference>
<dbReference type="InterPro" id="IPR036847">
    <property type="entry name" value="RimP_C_sf"/>
</dbReference>
<dbReference type="InterPro" id="IPR028989">
    <property type="entry name" value="RimP_N"/>
</dbReference>
<dbReference type="InterPro" id="IPR035956">
    <property type="entry name" value="RimP_N_sf"/>
</dbReference>
<dbReference type="NCBIfam" id="NF000928">
    <property type="entry name" value="PRK00092.1-2"/>
    <property type="match status" value="1"/>
</dbReference>
<dbReference type="PANTHER" id="PTHR33867">
    <property type="entry name" value="RIBOSOME MATURATION FACTOR RIMP"/>
    <property type="match status" value="1"/>
</dbReference>
<dbReference type="PANTHER" id="PTHR33867:SF1">
    <property type="entry name" value="RIBOSOME MATURATION FACTOR RIMP"/>
    <property type="match status" value="1"/>
</dbReference>
<dbReference type="Pfam" id="PF17384">
    <property type="entry name" value="DUF150_C"/>
    <property type="match status" value="1"/>
</dbReference>
<dbReference type="Pfam" id="PF02576">
    <property type="entry name" value="RimP_N"/>
    <property type="match status" value="1"/>
</dbReference>
<dbReference type="SUPFAM" id="SSF74942">
    <property type="entry name" value="YhbC-like, C-terminal domain"/>
    <property type="match status" value="1"/>
</dbReference>
<dbReference type="SUPFAM" id="SSF75420">
    <property type="entry name" value="YhbC-like, N-terminal domain"/>
    <property type="match status" value="1"/>
</dbReference>
<keyword id="KW-0963">Cytoplasm</keyword>
<keyword id="KW-1185">Reference proteome</keyword>
<keyword id="KW-0690">Ribosome biogenesis</keyword>
<feature type="chain" id="PRO_1000149787" description="Ribosome maturation factor RimP">
    <location>
        <begin position="1"/>
        <end position="152"/>
    </location>
</feature>
<comment type="function">
    <text evidence="1">Required for maturation of 30S ribosomal subunits.</text>
</comment>
<comment type="subcellular location">
    <subcellularLocation>
        <location evidence="1">Cytoplasm</location>
    </subcellularLocation>
</comment>
<comment type="similarity">
    <text evidence="1">Belongs to the RimP family.</text>
</comment>
<protein>
    <recommendedName>
        <fullName evidence="1">Ribosome maturation factor RimP</fullName>
    </recommendedName>
</protein>
<name>RIMP_RUMCH</name>
<evidence type="ECO:0000255" key="1">
    <source>
        <dbReference type="HAMAP-Rule" id="MF_01077"/>
    </source>
</evidence>